<proteinExistence type="inferred from homology"/>
<accession>C3LQY9</accession>
<protein>
    <recommendedName>
        <fullName evidence="1">Multifunctional CCA protein</fullName>
    </recommendedName>
    <domain>
        <recommendedName>
            <fullName evidence="1">CCA-adding enzyme</fullName>
            <ecNumber evidence="1">2.7.7.72</ecNumber>
        </recommendedName>
        <alternativeName>
            <fullName evidence="1">CCA tRNA nucleotidyltransferase</fullName>
        </alternativeName>
        <alternativeName>
            <fullName evidence="1">tRNA CCA-pyrophosphorylase</fullName>
        </alternativeName>
        <alternativeName>
            <fullName evidence="1">tRNA adenylyl-/cytidylyl-transferase</fullName>
        </alternativeName>
        <alternativeName>
            <fullName evidence="1">tRNA nucleotidyltransferase</fullName>
        </alternativeName>
        <alternativeName>
            <fullName evidence="1">tRNA-NT</fullName>
        </alternativeName>
    </domain>
    <domain>
        <recommendedName>
            <fullName evidence="1">2'-nucleotidase</fullName>
            <ecNumber evidence="1">3.1.3.-</ecNumber>
        </recommendedName>
    </domain>
    <domain>
        <recommendedName>
            <fullName evidence="1">2',3'-cyclic phosphodiesterase</fullName>
            <ecNumber evidence="1">3.1.4.-</ecNumber>
        </recommendedName>
    </domain>
    <domain>
        <recommendedName>
            <fullName evidence="1">Phosphatase</fullName>
            <ecNumber evidence="1">3.1.3.-</ecNumber>
        </recommendedName>
    </domain>
</protein>
<dbReference type="EC" id="2.7.7.72" evidence="1"/>
<dbReference type="EC" id="3.1.3.-" evidence="1"/>
<dbReference type="EC" id="3.1.4.-" evidence="1"/>
<dbReference type="EMBL" id="CP001233">
    <property type="protein sequence ID" value="ACP06667.1"/>
    <property type="molecule type" value="Genomic_DNA"/>
</dbReference>
<dbReference type="RefSeq" id="WP_001167859.1">
    <property type="nucleotide sequence ID" value="NC_012578.1"/>
</dbReference>
<dbReference type="SMR" id="C3LQY9"/>
<dbReference type="KEGG" id="vcm:VCM66_2369"/>
<dbReference type="HOGENOM" id="CLU_015961_1_1_6"/>
<dbReference type="Proteomes" id="UP000001217">
    <property type="component" value="Chromosome I"/>
</dbReference>
<dbReference type="GO" id="GO:0005524">
    <property type="term" value="F:ATP binding"/>
    <property type="evidence" value="ECO:0007669"/>
    <property type="project" value="UniProtKB-UniRule"/>
</dbReference>
<dbReference type="GO" id="GO:0004810">
    <property type="term" value="F:CCA tRNA nucleotidyltransferase activity"/>
    <property type="evidence" value="ECO:0007669"/>
    <property type="project" value="UniProtKB-UniRule"/>
</dbReference>
<dbReference type="GO" id="GO:0004112">
    <property type="term" value="F:cyclic-nucleotide phosphodiesterase activity"/>
    <property type="evidence" value="ECO:0007669"/>
    <property type="project" value="UniProtKB-UniRule"/>
</dbReference>
<dbReference type="GO" id="GO:0000287">
    <property type="term" value="F:magnesium ion binding"/>
    <property type="evidence" value="ECO:0007669"/>
    <property type="project" value="UniProtKB-UniRule"/>
</dbReference>
<dbReference type="GO" id="GO:0016791">
    <property type="term" value="F:phosphatase activity"/>
    <property type="evidence" value="ECO:0007669"/>
    <property type="project" value="UniProtKB-UniRule"/>
</dbReference>
<dbReference type="GO" id="GO:0000049">
    <property type="term" value="F:tRNA binding"/>
    <property type="evidence" value="ECO:0007669"/>
    <property type="project" value="UniProtKB-UniRule"/>
</dbReference>
<dbReference type="GO" id="GO:0042245">
    <property type="term" value="P:RNA repair"/>
    <property type="evidence" value="ECO:0007669"/>
    <property type="project" value="UniProtKB-KW"/>
</dbReference>
<dbReference type="GO" id="GO:0001680">
    <property type="term" value="P:tRNA 3'-terminal CCA addition"/>
    <property type="evidence" value="ECO:0007669"/>
    <property type="project" value="UniProtKB-UniRule"/>
</dbReference>
<dbReference type="CDD" id="cd00077">
    <property type="entry name" value="HDc"/>
    <property type="match status" value="1"/>
</dbReference>
<dbReference type="CDD" id="cd05398">
    <property type="entry name" value="NT_ClassII-CCAase"/>
    <property type="match status" value="1"/>
</dbReference>
<dbReference type="FunFam" id="1.10.3090.10:FF:000001">
    <property type="entry name" value="Multifunctional CCA protein"/>
    <property type="match status" value="1"/>
</dbReference>
<dbReference type="FunFam" id="3.30.460.10:FF:000016">
    <property type="entry name" value="Multifunctional CCA protein"/>
    <property type="match status" value="1"/>
</dbReference>
<dbReference type="Gene3D" id="3.30.460.10">
    <property type="entry name" value="Beta Polymerase, domain 2"/>
    <property type="match status" value="1"/>
</dbReference>
<dbReference type="Gene3D" id="1.10.3090.10">
    <property type="entry name" value="cca-adding enzyme, domain 2"/>
    <property type="match status" value="1"/>
</dbReference>
<dbReference type="HAMAP" id="MF_01261">
    <property type="entry name" value="CCA_bact_type1"/>
    <property type="match status" value="1"/>
</dbReference>
<dbReference type="HAMAP" id="MF_01262">
    <property type="entry name" value="CCA_bact_type2"/>
    <property type="match status" value="1"/>
</dbReference>
<dbReference type="InterPro" id="IPR012006">
    <property type="entry name" value="CCA_bact"/>
</dbReference>
<dbReference type="InterPro" id="IPR003607">
    <property type="entry name" value="HD/PDEase_dom"/>
</dbReference>
<dbReference type="InterPro" id="IPR006674">
    <property type="entry name" value="HD_domain"/>
</dbReference>
<dbReference type="InterPro" id="IPR043519">
    <property type="entry name" value="NT_sf"/>
</dbReference>
<dbReference type="InterPro" id="IPR002646">
    <property type="entry name" value="PolA_pol_head_dom"/>
</dbReference>
<dbReference type="InterPro" id="IPR032828">
    <property type="entry name" value="PolyA_RNA-bd"/>
</dbReference>
<dbReference type="InterPro" id="IPR050124">
    <property type="entry name" value="tRNA_CCA-adding_enzyme"/>
</dbReference>
<dbReference type="NCBIfam" id="NF008137">
    <property type="entry name" value="PRK10885.1"/>
    <property type="match status" value="1"/>
</dbReference>
<dbReference type="PANTHER" id="PTHR47545">
    <property type="entry name" value="MULTIFUNCTIONAL CCA PROTEIN"/>
    <property type="match status" value="1"/>
</dbReference>
<dbReference type="PANTHER" id="PTHR47545:SF1">
    <property type="entry name" value="MULTIFUNCTIONAL CCA PROTEIN"/>
    <property type="match status" value="1"/>
</dbReference>
<dbReference type="Pfam" id="PF01966">
    <property type="entry name" value="HD"/>
    <property type="match status" value="1"/>
</dbReference>
<dbReference type="Pfam" id="PF01743">
    <property type="entry name" value="PolyA_pol"/>
    <property type="match status" value="1"/>
</dbReference>
<dbReference type="Pfam" id="PF12627">
    <property type="entry name" value="PolyA_pol_RNAbd"/>
    <property type="match status" value="1"/>
</dbReference>
<dbReference type="PIRSF" id="PIRSF000813">
    <property type="entry name" value="CCA_bact"/>
    <property type="match status" value="1"/>
</dbReference>
<dbReference type="SUPFAM" id="SSF81301">
    <property type="entry name" value="Nucleotidyltransferase"/>
    <property type="match status" value="1"/>
</dbReference>
<dbReference type="SUPFAM" id="SSF81891">
    <property type="entry name" value="Poly A polymerase C-terminal region-like"/>
    <property type="match status" value="1"/>
</dbReference>
<dbReference type="PROSITE" id="PS51831">
    <property type="entry name" value="HD"/>
    <property type="match status" value="1"/>
</dbReference>
<keyword id="KW-0067">ATP-binding</keyword>
<keyword id="KW-0378">Hydrolase</keyword>
<keyword id="KW-0460">Magnesium</keyword>
<keyword id="KW-0479">Metal-binding</keyword>
<keyword id="KW-0511">Multifunctional enzyme</keyword>
<keyword id="KW-0533">Nickel</keyword>
<keyword id="KW-0547">Nucleotide-binding</keyword>
<keyword id="KW-0548">Nucleotidyltransferase</keyword>
<keyword id="KW-0692">RNA repair</keyword>
<keyword id="KW-0694">RNA-binding</keyword>
<keyword id="KW-0808">Transferase</keyword>
<keyword id="KW-0819">tRNA processing</keyword>
<gene>
    <name evidence="1" type="primary">cca</name>
    <name type="ordered locus">VCM66_2369</name>
</gene>
<reference key="1">
    <citation type="journal article" date="2008" name="PLoS ONE">
        <title>A recalibrated molecular clock and independent origins for the cholera pandemic clones.</title>
        <authorList>
            <person name="Feng L."/>
            <person name="Reeves P.R."/>
            <person name="Lan R."/>
            <person name="Ren Y."/>
            <person name="Gao C."/>
            <person name="Zhou Z."/>
            <person name="Ren Y."/>
            <person name="Cheng J."/>
            <person name="Wang W."/>
            <person name="Wang J."/>
            <person name="Qian W."/>
            <person name="Li D."/>
            <person name="Wang L."/>
        </authorList>
    </citation>
    <scope>NUCLEOTIDE SEQUENCE [LARGE SCALE GENOMIC DNA]</scope>
    <source>
        <strain>M66-2</strain>
    </source>
</reference>
<sequence>MQIYLVGGAVRDQLLQLPVYDRDWVVVGSSPQAMLAAGFQAVGKDFPVFLHPNSKEEHALARTERKTSVGYTGFACHYAPDVTLEEDLLRRDLTINAMAQDNSGQLIDPYGGQRDLAAKVLRHVSPAFVEDPLRVLRVARFAAKLHHLGFTVAEETMQLMAKIAQSGELQHLTAERVWQEWHKSLSAHHPEMFLQVLRDCGALAVVLPEIDRLFGVPQPEKWHPEIDTGIHTLMVAKQAAQLSDSLLVRFAAQVHDLGKGVTPPSEWPRHKLHCHTGLNIIESLCERIRVPNEFRDLALAVCAQHSNIHRADELKPTTKLKVLGLLDVWRKPERLEQVLLCCEADHRGRLGLESEPYPQREIFLRAYQAALGVAVQAVIADGFQGKHIKEELDKRRVSAIEAL</sequence>
<name>CCA_VIBCM</name>
<evidence type="ECO:0000255" key="1">
    <source>
        <dbReference type="HAMAP-Rule" id="MF_01261"/>
    </source>
</evidence>
<organism>
    <name type="scientific">Vibrio cholerae serotype O1 (strain M66-2)</name>
    <dbReference type="NCBI Taxonomy" id="579112"/>
    <lineage>
        <taxon>Bacteria</taxon>
        <taxon>Pseudomonadati</taxon>
        <taxon>Pseudomonadota</taxon>
        <taxon>Gammaproteobacteria</taxon>
        <taxon>Vibrionales</taxon>
        <taxon>Vibrionaceae</taxon>
        <taxon>Vibrio</taxon>
    </lineage>
</organism>
<feature type="chain" id="PRO_1000165126" description="Multifunctional CCA protein">
    <location>
        <begin position="1"/>
        <end position="403"/>
    </location>
</feature>
<feature type="domain" description="HD" evidence="1">
    <location>
        <begin position="228"/>
        <end position="329"/>
    </location>
</feature>
<feature type="binding site" evidence="1">
    <location>
        <position position="8"/>
    </location>
    <ligand>
        <name>ATP</name>
        <dbReference type="ChEBI" id="CHEBI:30616"/>
    </ligand>
</feature>
<feature type="binding site" evidence="1">
    <location>
        <position position="8"/>
    </location>
    <ligand>
        <name>CTP</name>
        <dbReference type="ChEBI" id="CHEBI:37563"/>
    </ligand>
</feature>
<feature type="binding site" evidence="1">
    <location>
        <position position="11"/>
    </location>
    <ligand>
        <name>ATP</name>
        <dbReference type="ChEBI" id="CHEBI:30616"/>
    </ligand>
</feature>
<feature type="binding site" evidence="1">
    <location>
        <position position="11"/>
    </location>
    <ligand>
        <name>CTP</name>
        <dbReference type="ChEBI" id="CHEBI:37563"/>
    </ligand>
</feature>
<feature type="binding site" evidence="1">
    <location>
        <position position="21"/>
    </location>
    <ligand>
        <name>Mg(2+)</name>
        <dbReference type="ChEBI" id="CHEBI:18420"/>
    </ligand>
</feature>
<feature type="binding site" evidence="1">
    <location>
        <position position="23"/>
    </location>
    <ligand>
        <name>Mg(2+)</name>
        <dbReference type="ChEBI" id="CHEBI:18420"/>
    </ligand>
</feature>
<feature type="binding site" evidence="1">
    <location>
        <position position="91"/>
    </location>
    <ligand>
        <name>ATP</name>
        <dbReference type="ChEBI" id="CHEBI:30616"/>
    </ligand>
</feature>
<feature type="binding site" evidence="1">
    <location>
        <position position="91"/>
    </location>
    <ligand>
        <name>CTP</name>
        <dbReference type="ChEBI" id="CHEBI:37563"/>
    </ligand>
</feature>
<feature type="binding site" evidence="1">
    <location>
        <position position="137"/>
    </location>
    <ligand>
        <name>ATP</name>
        <dbReference type="ChEBI" id="CHEBI:30616"/>
    </ligand>
</feature>
<feature type="binding site" evidence="1">
    <location>
        <position position="137"/>
    </location>
    <ligand>
        <name>CTP</name>
        <dbReference type="ChEBI" id="CHEBI:37563"/>
    </ligand>
</feature>
<feature type="binding site" evidence="1">
    <location>
        <position position="140"/>
    </location>
    <ligand>
        <name>ATP</name>
        <dbReference type="ChEBI" id="CHEBI:30616"/>
    </ligand>
</feature>
<feature type="binding site" evidence="1">
    <location>
        <position position="140"/>
    </location>
    <ligand>
        <name>CTP</name>
        <dbReference type="ChEBI" id="CHEBI:37563"/>
    </ligand>
</feature>
<comment type="function">
    <text evidence="1">Catalyzes the addition and repair of the essential 3'-terminal CCA sequence in tRNAs without using a nucleic acid template. Adds these three nucleotides in the order of C, C, and A to the tRNA nucleotide-73, using CTP and ATP as substrates and producing inorganic pyrophosphate. tRNA 3'-terminal CCA addition is required both for tRNA processing and repair. Also involved in tRNA surveillance by mediating tandem CCA addition to generate a CCACCA at the 3' terminus of unstable tRNAs. While stable tRNAs receive only 3'-terminal CCA, unstable tRNAs are marked with CCACCA and rapidly degraded.</text>
</comment>
<comment type="catalytic activity">
    <reaction evidence="1">
        <text>a tRNA precursor + 2 CTP + ATP = a tRNA with a 3' CCA end + 3 diphosphate</text>
        <dbReference type="Rhea" id="RHEA:14433"/>
        <dbReference type="Rhea" id="RHEA-COMP:10465"/>
        <dbReference type="Rhea" id="RHEA-COMP:10468"/>
        <dbReference type="ChEBI" id="CHEBI:30616"/>
        <dbReference type="ChEBI" id="CHEBI:33019"/>
        <dbReference type="ChEBI" id="CHEBI:37563"/>
        <dbReference type="ChEBI" id="CHEBI:74896"/>
        <dbReference type="ChEBI" id="CHEBI:83071"/>
        <dbReference type="EC" id="2.7.7.72"/>
    </reaction>
</comment>
<comment type="catalytic activity">
    <reaction evidence="1">
        <text>a tRNA with a 3' CCA end + 2 CTP + ATP = a tRNA with a 3' CCACCA end + 3 diphosphate</text>
        <dbReference type="Rhea" id="RHEA:76235"/>
        <dbReference type="Rhea" id="RHEA-COMP:10468"/>
        <dbReference type="Rhea" id="RHEA-COMP:18655"/>
        <dbReference type="ChEBI" id="CHEBI:30616"/>
        <dbReference type="ChEBI" id="CHEBI:33019"/>
        <dbReference type="ChEBI" id="CHEBI:37563"/>
        <dbReference type="ChEBI" id="CHEBI:83071"/>
        <dbReference type="ChEBI" id="CHEBI:195187"/>
    </reaction>
    <physiologicalReaction direction="left-to-right" evidence="1">
        <dbReference type="Rhea" id="RHEA:76236"/>
    </physiologicalReaction>
</comment>
<comment type="cofactor">
    <cofactor evidence="1">
        <name>Mg(2+)</name>
        <dbReference type="ChEBI" id="CHEBI:18420"/>
    </cofactor>
    <text evidence="1">Magnesium is required for nucleotidyltransferase activity.</text>
</comment>
<comment type="cofactor">
    <cofactor evidence="1">
        <name>Ni(2+)</name>
        <dbReference type="ChEBI" id="CHEBI:49786"/>
    </cofactor>
    <text evidence="1">Nickel for phosphatase activity.</text>
</comment>
<comment type="subunit">
    <text evidence="1">Monomer. Can also form homodimers and oligomers.</text>
</comment>
<comment type="domain">
    <text evidence="1">Comprises two domains: an N-terminal domain containing the nucleotidyltransferase activity and a C-terminal HD domain associated with both phosphodiesterase and phosphatase activities.</text>
</comment>
<comment type="miscellaneous">
    <text evidence="1">A single active site specifically recognizes both ATP and CTP and is responsible for their addition.</text>
</comment>
<comment type="similarity">
    <text evidence="1">Belongs to the tRNA nucleotidyltransferase/poly(A) polymerase family. Bacterial CCA-adding enzyme type 1 subfamily.</text>
</comment>